<comment type="function">
    <text evidence="1">Required for nucleoid occlusion (NO) phenomenon, which prevents Z-ring formation and cell division over the nucleoid. Acts as a DNA-associated cell division inhibitor that binds simultaneously chromosomal DNA and FtsZ, and disrupts the assembly of FtsZ polymers. SlmA-DNA-binding sequences (SBS) are dispersed on non-Ter regions of the chromosome, preventing FtsZ polymerization at these regions.</text>
</comment>
<comment type="subunit">
    <text evidence="1">Homodimer. Interacts with FtsZ.</text>
</comment>
<comment type="subcellular location">
    <subcellularLocation>
        <location evidence="1">Cytoplasm</location>
        <location evidence="1">Nucleoid</location>
    </subcellularLocation>
</comment>
<comment type="similarity">
    <text evidence="1">Belongs to the nucleoid occlusion factor SlmA family.</text>
</comment>
<sequence length="198" mass="22783">MAEKQTAKRNRREEILQSLALMLESSDGSQRITTAKLAASVGVSEAALYRHFPSKTRMFDSLIEFIEDSLITRINLILKDEKDTTARLRLIVLLILGFGERNPGLTRIMTGHALMFEQDKLQGRINQLFERIEAQLRQVLREKKMREGEGYTTDENVLAGQLLAFCEGMLSRFVRSEFKYRPTDDFDTRWPLVAAQLQ</sequence>
<evidence type="ECO:0000255" key="1">
    <source>
        <dbReference type="HAMAP-Rule" id="MF_01839"/>
    </source>
</evidence>
<keyword id="KW-0131">Cell cycle</keyword>
<keyword id="KW-0132">Cell division</keyword>
<keyword id="KW-0175">Coiled coil</keyword>
<keyword id="KW-0963">Cytoplasm</keyword>
<keyword id="KW-0238">DNA-binding</keyword>
<dbReference type="EMBL" id="CP000653">
    <property type="protein sequence ID" value="ABP58788.1"/>
    <property type="molecule type" value="Genomic_DNA"/>
</dbReference>
<dbReference type="RefSeq" id="WP_011915366.1">
    <property type="nucleotide sequence ID" value="NC_009436.1"/>
</dbReference>
<dbReference type="SMR" id="A4W508"/>
<dbReference type="STRING" id="399742.Ent638_0098"/>
<dbReference type="GeneID" id="93307272"/>
<dbReference type="KEGG" id="ent:Ent638_0098"/>
<dbReference type="eggNOG" id="COG1309">
    <property type="taxonomic scope" value="Bacteria"/>
</dbReference>
<dbReference type="HOGENOM" id="CLU_069356_5_0_6"/>
<dbReference type="OrthoDB" id="9179041at2"/>
<dbReference type="Proteomes" id="UP000000230">
    <property type="component" value="Chromosome"/>
</dbReference>
<dbReference type="GO" id="GO:0043590">
    <property type="term" value="C:bacterial nucleoid"/>
    <property type="evidence" value="ECO:0007669"/>
    <property type="project" value="UniProtKB-UniRule"/>
</dbReference>
<dbReference type="GO" id="GO:0005737">
    <property type="term" value="C:cytoplasm"/>
    <property type="evidence" value="ECO:0007669"/>
    <property type="project" value="UniProtKB-UniRule"/>
</dbReference>
<dbReference type="GO" id="GO:0003700">
    <property type="term" value="F:DNA-binding transcription factor activity"/>
    <property type="evidence" value="ECO:0007669"/>
    <property type="project" value="TreeGrafter"/>
</dbReference>
<dbReference type="GO" id="GO:0000976">
    <property type="term" value="F:transcription cis-regulatory region binding"/>
    <property type="evidence" value="ECO:0007669"/>
    <property type="project" value="TreeGrafter"/>
</dbReference>
<dbReference type="GO" id="GO:0051301">
    <property type="term" value="P:cell division"/>
    <property type="evidence" value="ECO:0007669"/>
    <property type="project" value="UniProtKB-KW"/>
</dbReference>
<dbReference type="GO" id="GO:0010974">
    <property type="term" value="P:negative regulation of division septum assembly"/>
    <property type="evidence" value="ECO:0007669"/>
    <property type="project" value="InterPro"/>
</dbReference>
<dbReference type="FunFam" id="1.10.357.10:FF:000002">
    <property type="entry name" value="Nucleoid occlusion factor SlmA"/>
    <property type="match status" value="1"/>
</dbReference>
<dbReference type="Gene3D" id="1.10.357.10">
    <property type="entry name" value="Tetracycline Repressor, domain 2"/>
    <property type="match status" value="1"/>
</dbReference>
<dbReference type="HAMAP" id="MF_01839">
    <property type="entry name" value="NO_factor_SlmA"/>
    <property type="match status" value="1"/>
</dbReference>
<dbReference type="InterPro" id="IPR023772">
    <property type="entry name" value="DNA-bd_HTH_TetR-type_CS"/>
</dbReference>
<dbReference type="InterPro" id="IPR009057">
    <property type="entry name" value="Homeodomain-like_sf"/>
</dbReference>
<dbReference type="InterPro" id="IPR050109">
    <property type="entry name" value="HTH-type_TetR-like_transc_reg"/>
</dbReference>
<dbReference type="InterPro" id="IPR001647">
    <property type="entry name" value="HTH_TetR"/>
</dbReference>
<dbReference type="InterPro" id="IPR023769">
    <property type="entry name" value="NO_SlmA"/>
</dbReference>
<dbReference type="InterPro" id="IPR054580">
    <property type="entry name" value="SlmA-like_C"/>
</dbReference>
<dbReference type="InterPro" id="IPR036271">
    <property type="entry name" value="Tet_transcr_reg_TetR-rel_C_sf"/>
</dbReference>
<dbReference type="NCBIfam" id="NF007015">
    <property type="entry name" value="PRK09480.1"/>
    <property type="match status" value="1"/>
</dbReference>
<dbReference type="PANTHER" id="PTHR30055">
    <property type="entry name" value="HTH-TYPE TRANSCRIPTIONAL REGULATOR RUTR"/>
    <property type="match status" value="1"/>
</dbReference>
<dbReference type="PANTHER" id="PTHR30055:SF183">
    <property type="entry name" value="NUCLEOID OCCLUSION FACTOR SLMA"/>
    <property type="match status" value="1"/>
</dbReference>
<dbReference type="Pfam" id="PF22276">
    <property type="entry name" value="SlmA-like_C"/>
    <property type="match status" value="1"/>
</dbReference>
<dbReference type="Pfam" id="PF00440">
    <property type="entry name" value="TetR_N"/>
    <property type="match status" value="1"/>
</dbReference>
<dbReference type="SUPFAM" id="SSF46689">
    <property type="entry name" value="Homeodomain-like"/>
    <property type="match status" value="1"/>
</dbReference>
<dbReference type="SUPFAM" id="SSF48498">
    <property type="entry name" value="Tetracyclin repressor-like, C-terminal domain"/>
    <property type="match status" value="1"/>
</dbReference>
<dbReference type="PROSITE" id="PS01081">
    <property type="entry name" value="HTH_TETR_1"/>
    <property type="match status" value="1"/>
</dbReference>
<dbReference type="PROSITE" id="PS50977">
    <property type="entry name" value="HTH_TETR_2"/>
    <property type="match status" value="1"/>
</dbReference>
<organism>
    <name type="scientific">Enterobacter sp. (strain 638)</name>
    <dbReference type="NCBI Taxonomy" id="399742"/>
    <lineage>
        <taxon>Bacteria</taxon>
        <taxon>Pseudomonadati</taxon>
        <taxon>Pseudomonadota</taxon>
        <taxon>Gammaproteobacteria</taxon>
        <taxon>Enterobacterales</taxon>
        <taxon>Enterobacteriaceae</taxon>
        <taxon>Enterobacter</taxon>
    </lineage>
</organism>
<accession>A4W508</accession>
<gene>
    <name evidence="1" type="primary">slmA</name>
    <name type="ordered locus">Ent638_0098</name>
</gene>
<protein>
    <recommendedName>
        <fullName evidence="1">Nucleoid occlusion factor SlmA</fullName>
    </recommendedName>
</protein>
<proteinExistence type="inferred from homology"/>
<feature type="chain" id="PRO_1000070517" description="Nucleoid occlusion factor SlmA">
    <location>
        <begin position="1"/>
        <end position="198"/>
    </location>
</feature>
<feature type="domain" description="HTH tetR-type" evidence="1">
    <location>
        <begin position="10"/>
        <end position="70"/>
    </location>
</feature>
<feature type="DNA-binding region" description="H-T-H motif" evidence="1">
    <location>
        <begin position="33"/>
        <end position="52"/>
    </location>
</feature>
<feature type="coiled-coil region" evidence="1">
    <location>
        <begin position="117"/>
        <end position="145"/>
    </location>
</feature>
<name>SLMA_ENT38</name>
<reference key="1">
    <citation type="journal article" date="2010" name="PLoS Genet.">
        <title>Genome sequence of the plant growth promoting endophytic bacterium Enterobacter sp. 638.</title>
        <authorList>
            <person name="Taghavi S."/>
            <person name="van der Lelie D."/>
            <person name="Hoffman A."/>
            <person name="Zhang Y.B."/>
            <person name="Walla M.D."/>
            <person name="Vangronsveld J."/>
            <person name="Newman L."/>
            <person name="Monchy S."/>
        </authorList>
    </citation>
    <scope>NUCLEOTIDE SEQUENCE [LARGE SCALE GENOMIC DNA]</scope>
    <source>
        <strain>638</strain>
    </source>
</reference>